<accession>B4UGV0</accession>
<protein>
    <recommendedName>
        <fullName evidence="1">UDP-3-O-acylglucosamine N-acyltransferase</fullName>
        <ecNumber evidence="1">2.3.1.191</ecNumber>
    </recommendedName>
</protein>
<gene>
    <name evidence="1" type="primary">lpxD</name>
    <name type="ordered locus">AnaeK_1142</name>
</gene>
<proteinExistence type="inferred from homology"/>
<keyword id="KW-0012">Acyltransferase</keyword>
<keyword id="KW-0441">Lipid A biosynthesis</keyword>
<keyword id="KW-0444">Lipid biosynthesis</keyword>
<keyword id="KW-0443">Lipid metabolism</keyword>
<keyword id="KW-0677">Repeat</keyword>
<keyword id="KW-0808">Transferase</keyword>
<comment type="function">
    <text evidence="1">Catalyzes the N-acylation of UDP-3-O-acylglucosamine using 3-hydroxyacyl-ACP as the acyl donor. Is involved in the biosynthesis of lipid A, a phosphorylated glycolipid that anchors the lipopolysaccharide to the outer membrane of the cell.</text>
</comment>
<comment type="catalytic activity">
    <reaction evidence="1">
        <text>a UDP-3-O-[(3R)-3-hydroxyacyl]-alpha-D-glucosamine + a (3R)-hydroxyacyl-[ACP] = a UDP-2-N,3-O-bis[(3R)-3-hydroxyacyl]-alpha-D-glucosamine + holo-[ACP] + H(+)</text>
        <dbReference type="Rhea" id="RHEA:53836"/>
        <dbReference type="Rhea" id="RHEA-COMP:9685"/>
        <dbReference type="Rhea" id="RHEA-COMP:9945"/>
        <dbReference type="ChEBI" id="CHEBI:15378"/>
        <dbReference type="ChEBI" id="CHEBI:64479"/>
        <dbReference type="ChEBI" id="CHEBI:78827"/>
        <dbReference type="ChEBI" id="CHEBI:137740"/>
        <dbReference type="ChEBI" id="CHEBI:137748"/>
        <dbReference type="EC" id="2.3.1.191"/>
    </reaction>
</comment>
<comment type="pathway">
    <text evidence="1">Bacterial outer membrane biogenesis; LPS lipid A biosynthesis.</text>
</comment>
<comment type="subunit">
    <text evidence="1">Homotrimer.</text>
</comment>
<comment type="similarity">
    <text evidence="1">Belongs to the transferase hexapeptide repeat family. LpxD subfamily.</text>
</comment>
<feature type="chain" id="PRO_1000127660" description="UDP-3-O-acylglucosamine N-acyltransferase">
    <location>
        <begin position="1"/>
        <end position="354"/>
    </location>
</feature>
<feature type="active site" description="Proton acceptor" evidence="1">
    <location>
        <position position="245"/>
    </location>
</feature>
<evidence type="ECO:0000255" key="1">
    <source>
        <dbReference type="HAMAP-Rule" id="MF_00523"/>
    </source>
</evidence>
<organism>
    <name type="scientific">Anaeromyxobacter sp. (strain K)</name>
    <dbReference type="NCBI Taxonomy" id="447217"/>
    <lineage>
        <taxon>Bacteria</taxon>
        <taxon>Pseudomonadati</taxon>
        <taxon>Myxococcota</taxon>
        <taxon>Myxococcia</taxon>
        <taxon>Myxococcales</taxon>
        <taxon>Cystobacterineae</taxon>
        <taxon>Anaeromyxobacteraceae</taxon>
        <taxon>Anaeromyxobacter</taxon>
    </lineage>
</organism>
<reference key="1">
    <citation type="submission" date="2008-08" db="EMBL/GenBank/DDBJ databases">
        <title>Complete sequence of Anaeromyxobacter sp. K.</title>
        <authorList>
            <consortium name="US DOE Joint Genome Institute"/>
            <person name="Lucas S."/>
            <person name="Copeland A."/>
            <person name="Lapidus A."/>
            <person name="Glavina del Rio T."/>
            <person name="Dalin E."/>
            <person name="Tice H."/>
            <person name="Bruce D."/>
            <person name="Goodwin L."/>
            <person name="Pitluck S."/>
            <person name="Saunders E."/>
            <person name="Brettin T."/>
            <person name="Detter J.C."/>
            <person name="Han C."/>
            <person name="Larimer F."/>
            <person name="Land M."/>
            <person name="Hauser L."/>
            <person name="Kyrpides N."/>
            <person name="Ovchinnikiva G."/>
            <person name="Beliaev A."/>
        </authorList>
    </citation>
    <scope>NUCLEOTIDE SEQUENCE [LARGE SCALE GENOMIC DNA]</scope>
    <source>
        <strain>K</strain>
    </source>
</reference>
<sequence length="354" mass="37037">MASYTLAELAARVGGAVEGDGSLRLDGIAPLEEASASEISFFSNRKYRKAFEASRAGAVVVEPREQVPAGRTVLRVANAYLAFAKISTLFHPPREAVPEVAPTAVIHPTARVHPSAQVMPLACVGPDAQVGARSILFPGVHVADGARVGEDCVLYHNVVVRERCAVGNRVILQPGCVIGSDGFGFAFDPEGEGKGPRHYKVPQVGNVVVEDDVELGANTCVDRATLGTTRIGRGAKIDNLVQIAHNVQVGPLSLLVSQVGVAGSTKLGMGVVAGGQAGIVGHLEIGDGVRIGAQSGVMADVQAGETVSGSPAVPHGGWLKAMASLEHLHDMRKELRELRREVERLRADAGEDEP</sequence>
<dbReference type="EC" id="2.3.1.191" evidence="1"/>
<dbReference type="EMBL" id="CP001131">
    <property type="protein sequence ID" value="ACG72375.1"/>
    <property type="molecule type" value="Genomic_DNA"/>
</dbReference>
<dbReference type="RefSeq" id="WP_012525201.1">
    <property type="nucleotide sequence ID" value="NC_011145.1"/>
</dbReference>
<dbReference type="SMR" id="B4UGV0"/>
<dbReference type="KEGG" id="ank:AnaeK_1142"/>
<dbReference type="HOGENOM" id="CLU_049865_0_0_7"/>
<dbReference type="OrthoDB" id="9784739at2"/>
<dbReference type="UniPathway" id="UPA00973"/>
<dbReference type="Proteomes" id="UP000001871">
    <property type="component" value="Chromosome"/>
</dbReference>
<dbReference type="GO" id="GO:0016020">
    <property type="term" value="C:membrane"/>
    <property type="evidence" value="ECO:0007669"/>
    <property type="project" value="GOC"/>
</dbReference>
<dbReference type="GO" id="GO:0016410">
    <property type="term" value="F:N-acyltransferase activity"/>
    <property type="evidence" value="ECO:0007669"/>
    <property type="project" value="InterPro"/>
</dbReference>
<dbReference type="GO" id="GO:0009245">
    <property type="term" value="P:lipid A biosynthetic process"/>
    <property type="evidence" value="ECO:0007669"/>
    <property type="project" value="UniProtKB-UniRule"/>
</dbReference>
<dbReference type="CDD" id="cd03352">
    <property type="entry name" value="LbH_LpxD"/>
    <property type="match status" value="1"/>
</dbReference>
<dbReference type="Gene3D" id="2.160.10.10">
    <property type="entry name" value="Hexapeptide repeat proteins"/>
    <property type="match status" value="1"/>
</dbReference>
<dbReference type="Gene3D" id="3.40.1390.10">
    <property type="entry name" value="MurE/MurF, N-terminal domain"/>
    <property type="match status" value="1"/>
</dbReference>
<dbReference type="HAMAP" id="MF_00523">
    <property type="entry name" value="LpxD"/>
    <property type="match status" value="1"/>
</dbReference>
<dbReference type="InterPro" id="IPR001451">
    <property type="entry name" value="Hexapep"/>
</dbReference>
<dbReference type="InterPro" id="IPR007691">
    <property type="entry name" value="LpxD"/>
</dbReference>
<dbReference type="InterPro" id="IPR011004">
    <property type="entry name" value="Trimer_LpxA-like_sf"/>
</dbReference>
<dbReference type="InterPro" id="IPR020573">
    <property type="entry name" value="UDP_GlcNAc_AcTrfase_non-rep"/>
</dbReference>
<dbReference type="NCBIfam" id="TIGR01853">
    <property type="entry name" value="lipid_A_lpxD"/>
    <property type="match status" value="1"/>
</dbReference>
<dbReference type="NCBIfam" id="NF002060">
    <property type="entry name" value="PRK00892.1"/>
    <property type="match status" value="1"/>
</dbReference>
<dbReference type="PANTHER" id="PTHR43378">
    <property type="entry name" value="UDP-3-O-ACYLGLUCOSAMINE N-ACYLTRANSFERASE"/>
    <property type="match status" value="1"/>
</dbReference>
<dbReference type="PANTHER" id="PTHR43378:SF2">
    <property type="entry name" value="UDP-3-O-ACYLGLUCOSAMINE N-ACYLTRANSFERASE 1, MITOCHONDRIAL-RELATED"/>
    <property type="match status" value="1"/>
</dbReference>
<dbReference type="Pfam" id="PF00132">
    <property type="entry name" value="Hexapep"/>
    <property type="match status" value="1"/>
</dbReference>
<dbReference type="Pfam" id="PF04613">
    <property type="entry name" value="LpxD"/>
    <property type="match status" value="1"/>
</dbReference>
<dbReference type="SUPFAM" id="SSF51161">
    <property type="entry name" value="Trimeric LpxA-like enzymes"/>
    <property type="match status" value="1"/>
</dbReference>
<dbReference type="PROSITE" id="PS00101">
    <property type="entry name" value="HEXAPEP_TRANSFERASES"/>
    <property type="match status" value="1"/>
</dbReference>
<name>LPXD_ANASK</name>